<keyword id="KW-0413">Isomerase</keyword>
<keyword id="KW-1185">Reference proteome</keyword>
<keyword id="KW-0677">Repeat</keyword>
<proteinExistence type="evidence at protein level"/>
<evidence type="ECO:0000250" key="1">
    <source>
        <dbReference type="UniProtKB" id="P48449"/>
    </source>
</evidence>
<evidence type="ECO:0000269" key="2">
    <source>
    </source>
</evidence>
<evidence type="ECO:0000305" key="3"/>
<gene>
    <name type="primary">TTS1</name>
</gene>
<reference key="1">
    <citation type="journal article" date="2011" name="Plant Physiol.">
        <title>Two oxidosqualene cyclases responsible for biosynthesis of tomato fruit cuticular triterpenoids.</title>
        <authorList>
            <person name="Wang Z."/>
            <person name="Guhling O."/>
            <person name="Yao R."/>
            <person name="Li F."/>
            <person name="Yeats T."/>
            <person name="Rose J."/>
            <person name="Jetter R."/>
        </authorList>
    </citation>
    <scope>NUCLEOTIDE SEQUENCE [MRNA]</scope>
    <scope>FUNCTION</scope>
    <scope>CATALYTIC ACTIVITY</scope>
    <scope>TISSUE SPECIFICITY</scope>
    <source>
        <strain>cv. MicroTom</strain>
    </source>
</reference>
<protein>
    <recommendedName>
        <fullName>Beta-amyrin synthase</fullName>
        <ecNumber>5.4.99.39</ecNumber>
    </recommendedName>
    <alternativeName>
        <fullName>Triterpenoid synthase 1</fullName>
        <shortName>SlTTS1</shortName>
    </alternativeName>
</protein>
<comment type="function">
    <text evidence="2">Oxidosqualene cyclase converting oxidosqualene into beta-amyrin, generating five rings and eight asymmetric centers in a single transformation.</text>
</comment>
<comment type="catalytic activity">
    <reaction evidence="2">
        <text>(S)-2,3-epoxysqualene = beta-amyrin</text>
        <dbReference type="Rhea" id="RHEA:31007"/>
        <dbReference type="ChEBI" id="CHEBI:10352"/>
        <dbReference type="ChEBI" id="CHEBI:15441"/>
        <dbReference type="EC" id="5.4.99.39"/>
    </reaction>
</comment>
<comment type="tissue specificity">
    <text evidence="2">Expressed in the leaves and in the epidermal cells but not in the inner tissues of the fruit.</text>
</comment>
<comment type="similarity">
    <text evidence="3">Belongs to the terpene cyclase/mutase family.</text>
</comment>
<feature type="chain" id="PRO_0000413967" description="Beta-amyrin synthase">
    <location>
        <begin position="1"/>
        <end position="761"/>
    </location>
</feature>
<feature type="repeat" description="PFTB 1">
    <location>
        <begin position="148"/>
        <end position="189"/>
    </location>
</feature>
<feature type="repeat" description="PFTB 2">
    <location>
        <begin position="513"/>
        <end position="558"/>
    </location>
</feature>
<feature type="repeat" description="PFTB 3">
    <location>
        <begin position="590"/>
        <end position="630"/>
    </location>
</feature>
<feature type="repeat" description="PFTB 4">
    <location>
        <begin position="639"/>
        <end position="680"/>
    </location>
</feature>
<feature type="repeat" description="PFTB 5">
    <location>
        <begin position="701"/>
        <end position="742"/>
    </location>
</feature>
<feature type="active site" description="Proton donor" evidence="1">
    <location>
        <position position="484"/>
    </location>
</feature>
<sequence>MWKLKIAEGQNGPYLYSTNNYVGRQTWEFDPNGGTIEERAKIEEARQQFWNNRYKVKPSSDLLWRIQFLGEKNFKQKIPAVKVEEGEEISHEVATIALHRAVNFFSALQATDGHWPAENAGPLFFLPPLVMCMYITGHLNTVFPAEHRKEILRYIYCHQNEDGGWGLHIEGHSTMFCTALSYICMRILGEGPDGGVNNACARARKWILDHGSVTAIPSWGKTWLSILGVFEWIGTNPMPPEFWILPSFLPVHPAKMWCYCRMVYMPMSYLYGKRFVGPITPLILQLREELYDRPYDEINWKKVRHVCAKEDLYYPHPLVQDLMWDSLYICTEPLLTRWPFNKLRNKALEVTMKHIHYEDENSRYITIGCVEKVLCMLACWVEDPNGDYFKKHLARIPDYLWVAEDGMKMQSFGSQEWDTGFAIQALLASEMNDEIADTLRKGHDFIKQSQVTNNPSGDFKGMYRHISKGSWTFSDQDHGWQVSDCTAEALKCCLLLSTMPRELVGQAMEPGRLYDSVNVVLSLQSKNGGLAAWEPAGASEYLELLNPTEFFADIVIEHEYVECTASSIQALVLFKKLYPGHRTKEINIFIDNAVKYLEDVQMPDGSWYGNWGVCFTYGSWFALGGLVAAGKSYNNSAAVRKGVEFLLRTQRSDGGWGESYRSCPDKVYRELETNDSNLVQTAWALMGLIHSGQADRDPKPLHRAAKLLINSQMEDGDFPQQEITGVFMKNCMLHYAAYRNIYPLWGLAEYRKNVLLPLENN</sequence>
<organism>
    <name type="scientific">Solanum lycopersicum</name>
    <name type="common">Tomato</name>
    <name type="synonym">Lycopersicon esculentum</name>
    <dbReference type="NCBI Taxonomy" id="4081"/>
    <lineage>
        <taxon>Eukaryota</taxon>
        <taxon>Viridiplantae</taxon>
        <taxon>Streptophyta</taxon>
        <taxon>Embryophyta</taxon>
        <taxon>Tracheophyta</taxon>
        <taxon>Spermatophyta</taxon>
        <taxon>Magnoliopsida</taxon>
        <taxon>eudicotyledons</taxon>
        <taxon>Gunneridae</taxon>
        <taxon>Pentapetalae</taxon>
        <taxon>asterids</taxon>
        <taxon>lamiids</taxon>
        <taxon>Solanales</taxon>
        <taxon>Solanaceae</taxon>
        <taxon>Solanoideae</taxon>
        <taxon>Solaneae</taxon>
        <taxon>Solanum</taxon>
        <taxon>Solanum subgen. Lycopersicon</taxon>
    </lineage>
</organism>
<dbReference type="EC" id="5.4.99.39"/>
<dbReference type="EMBL" id="HQ266579">
    <property type="protein sequence ID" value="ADU52574.1"/>
    <property type="molecule type" value="mRNA"/>
</dbReference>
<dbReference type="RefSeq" id="NP_001234604.1">
    <property type="nucleotide sequence ID" value="NM_001247675.1"/>
</dbReference>
<dbReference type="SMR" id="E7DN63"/>
<dbReference type="FunCoup" id="E7DN63">
    <property type="interactions" value="759"/>
</dbReference>
<dbReference type="STRING" id="4081.E7DN63"/>
<dbReference type="PaxDb" id="4081-Solyc12g006530.1.1"/>
<dbReference type="GeneID" id="100529102"/>
<dbReference type="KEGG" id="sly:100529102"/>
<dbReference type="eggNOG" id="KOG0497">
    <property type="taxonomic scope" value="Eukaryota"/>
</dbReference>
<dbReference type="InParanoid" id="E7DN63"/>
<dbReference type="OrthoDB" id="21502at2759"/>
<dbReference type="BioCyc" id="MetaCyc:MONOMER-17974"/>
<dbReference type="BRENDA" id="5.4.99.39">
    <property type="organism ID" value="3101"/>
</dbReference>
<dbReference type="Proteomes" id="UP000004994">
    <property type="component" value="Unplaced"/>
</dbReference>
<dbReference type="ExpressionAtlas" id="E7DN63">
    <property type="expression patterns" value="baseline and differential"/>
</dbReference>
<dbReference type="GO" id="GO:0005811">
    <property type="term" value="C:lipid droplet"/>
    <property type="evidence" value="ECO:0007669"/>
    <property type="project" value="InterPro"/>
</dbReference>
<dbReference type="GO" id="GO:0042300">
    <property type="term" value="F:beta-amyrin synthase activity"/>
    <property type="evidence" value="ECO:0000318"/>
    <property type="project" value="GO_Central"/>
</dbReference>
<dbReference type="GO" id="GO:0016104">
    <property type="term" value="P:triterpenoid biosynthetic process"/>
    <property type="evidence" value="ECO:0000318"/>
    <property type="project" value="GO_Central"/>
</dbReference>
<dbReference type="CDD" id="cd02892">
    <property type="entry name" value="SQCY_1"/>
    <property type="match status" value="1"/>
</dbReference>
<dbReference type="FunFam" id="1.50.10.20:FF:000011">
    <property type="entry name" value="Terpene cyclase/mutase family member"/>
    <property type="match status" value="1"/>
</dbReference>
<dbReference type="FunFam" id="1.50.10.20:FF:000064">
    <property type="entry name" value="Uncharacterized protein"/>
    <property type="match status" value="1"/>
</dbReference>
<dbReference type="Gene3D" id="1.50.10.20">
    <property type="match status" value="2"/>
</dbReference>
<dbReference type="InterPro" id="IPR032696">
    <property type="entry name" value="SQ_cyclase_C"/>
</dbReference>
<dbReference type="InterPro" id="IPR032697">
    <property type="entry name" value="SQ_cyclase_N"/>
</dbReference>
<dbReference type="InterPro" id="IPR018333">
    <property type="entry name" value="Squalene_cyclase"/>
</dbReference>
<dbReference type="InterPro" id="IPR002365">
    <property type="entry name" value="Terpene_synthase_CS"/>
</dbReference>
<dbReference type="InterPro" id="IPR008930">
    <property type="entry name" value="Terpenoid_cyclase/PrenylTrfase"/>
</dbReference>
<dbReference type="NCBIfam" id="TIGR01787">
    <property type="entry name" value="squalene_cyclas"/>
    <property type="match status" value="1"/>
</dbReference>
<dbReference type="PANTHER" id="PTHR11764:SF58">
    <property type="entry name" value="BETA-AMYRIN SYNTHASE-RELATED"/>
    <property type="match status" value="1"/>
</dbReference>
<dbReference type="PANTHER" id="PTHR11764">
    <property type="entry name" value="TERPENE CYCLASE/MUTASE FAMILY MEMBER"/>
    <property type="match status" value="1"/>
</dbReference>
<dbReference type="Pfam" id="PF13243">
    <property type="entry name" value="SQHop_cyclase_C"/>
    <property type="match status" value="1"/>
</dbReference>
<dbReference type="Pfam" id="PF13249">
    <property type="entry name" value="SQHop_cyclase_N"/>
    <property type="match status" value="1"/>
</dbReference>
<dbReference type="SFLD" id="SFLDG01016">
    <property type="entry name" value="Prenyltransferase_Like_2"/>
    <property type="match status" value="1"/>
</dbReference>
<dbReference type="SUPFAM" id="SSF48239">
    <property type="entry name" value="Terpenoid cyclases/Protein prenyltransferases"/>
    <property type="match status" value="2"/>
</dbReference>
<dbReference type="PROSITE" id="PS01074">
    <property type="entry name" value="TERPENE_SYNTHASES"/>
    <property type="match status" value="1"/>
</dbReference>
<accession>E7DN63</accession>
<name>BAMS_SOLLC</name>